<comment type="function">
    <text evidence="1">Catalyzes the ferrous insertion into protoporphyrin IX.</text>
</comment>
<comment type="catalytic activity">
    <reaction evidence="1">
        <text>heme b + 2 H(+) = protoporphyrin IX + Fe(2+)</text>
        <dbReference type="Rhea" id="RHEA:22584"/>
        <dbReference type="ChEBI" id="CHEBI:15378"/>
        <dbReference type="ChEBI" id="CHEBI:29033"/>
        <dbReference type="ChEBI" id="CHEBI:57306"/>
        <dbReference type="ChEBI" id="CHEBI:60344"/>
        <dbReference type="EC" id="4.98.1.1"/>
    </reaction>
</comment>
<comment type="pathway">
    <text evidence="1">Porphyrin-containing compound metabolism; protoheme biosynthesis; protoheme from protoporphyrin-IX: step 1/1.</text>
</comment>
<comment type="subcellular location">
    <subcellularLocation>
        <location evidence="1">Cytoplasm</location>
    </subcellularLocation>
</comment>
<comment type="similarity">
    <text evidence="1">Belongs to the ferrochelatase family.</text>
</comment>
<accession>Q5F9U6</accession>
<dbReference type="EC" id="4.98.1.1" evidence="1"/>
<dbReference type="EMBL" id="AE004969">
    <property type="protein sequence ID" value="AAW89041.1"/>
    <property type="molecule type" value="Genomic_DNA"/>
</dbReference>
<dbReference type="RefSeq" id="YP_207453.1">
    <property type="nucleotide sequence ID" value="NC_002946.2"/>
</dbReference>
<dbReference type="SMR" id="Q5F9U6"/>
<dbReference type="STRING" id="242231.NGO_0293"/>
<dbReference type="DNASU" id="3281650"/>
<dbReference type="KEGG" id="ngo:NGO_0293"/>
<dbReference type="PATRIC" id="fig|242231.10.peg.364"/>
<dbReference type="HOGENOM" id="CLU_018884_0_0_4"/>
<dbReference type="UniPathway" id="UPA00252">
    <property type="reaction ID" value="UER00325"/>
</dbReference>
<dbReference type="Proteomes" id="UP000000535">
    <property type="component" value="Chromosome"/>
</dbReference>
<dbReference type="GO" id="GO:0005737">
    <property type="term" value="C:cytoplasm"/>
    <property type="evidence" value="ECO:0007669"/>
    <property type="project" value="UniProtKB-SubCell"/>
</dbReference>
<dbReference type="GO" id="GO:0004325">
    <property type="term" value="F:ferrochelatase activity"/>
    <property type="evidence" value="ECO:0007669"/>
    <property type="project" value="UniProtKB-UniRule"/>
</dbReference>
<dbReference type="GO" id="GO:0046872">
    <property type="term" value="F:metal ion binding"/>
    <property type="evidence" value="ECO:0007669"/>
    <property type="project" value="UniProtKB-KW"/>
</dbReference>
<dbReference type="GO" id="GO:0006783">
    <property type="term" value="P:heme biosynthetic process"/>
    <property type="evidence" value="ECO:0007669"/>
    <property type="project" value="UniProtKB-UniRule"/>
</dbReference>
<dbReference type="CDD" id="cd00419">
    <property type="entry name" value="Ferrochelatase_C"/>
    <property type="match status" value="1"/>
</dbReference>
<dbReference type="CDD" id="cd03411">
    <property type="entry name" value="Ferrochelatase_N"/>
    <property type="match status" value="1"/>
</dbReference>
<dbReference type="FunFam" id="3.40.50.1400:FF:000002">
    <property type="entry name" value="Ferrochelatase"/>
    <property type="match status" value="1"/>
</dbReference>
<dbReference type="Gene3D" id="3.40.50.1400">
    <property type="match status" value="2"/>
</dbReference>
<dbReference type="HAMAP" id="MF_00323">
    <property type="entry name" value="Ferrochelatase"/>
    <property type="match status" value="1"/>
</dbReference>
<dbReference type="InterPro" id="IPR001015">
    <property type="entry name" value="Ferrochelatase"/>
</dbReference>
<dbReference type="InterPro" id="IPR019772">
    <property type="entry name" value="Ferrochelatase_AS"/>
</dbReference>
<dbReference type="InterPro" id="IPR033644">
    <property type="entry name" value="Ferrochelatase_C"/>
</dbReference>
<dbReference type="InterPro" id="IPR033659">
    <property type="entry name" value="Ferrochelatase_N"/>
</dbReference>
<dbReference type="NCBIfam" id="TIGR00109">
    <property type="entry name" value="hemH"/>
    <property type="match status" value="1"/>
</dbReference>
<dbReference type="PANTHER" id="PTHR11108">
    <property type="entry name" value="FERROCHELATASE"/>
    <property type="match status" value="1"/>
</dbReference>
<dbReference type="PANTHER" id="PTHR11108:SF1">
    <property type="entry name" value="FERROCHELATASE, MITOCHONDRIAL"/>
    <property type="match status" value="1"/>
</dbReference>
<dbReference type="Pfam" id="PF00762">
    <property type="entry name" value="Ferrochelatase"/>
    <property type="match status" value="1"/>
</dbReference>
<dbReference type="SUPFAM" id="SSF53800">
    <property type="entry name" value="Chelatase"/>
    <property type="match status" value="1"/>
</dbReference>
<dbReference type="PROSITE" id="PS00534">
    <property type="entry name" value="FERROCHELATASE"/>
    <property type="match status" value="1"/>
</dbReference>
<reference key="1">
    <citation type="submission" date="2003-03" db="EMBL/GenBank/DDBJ databases">
        <title>The complete genome sequence of Neisseria gonorrhoeae.</title>
        <authorList>
            <person name="Lewis L.A."/>
            <person name="Gillaspy A.F."/>
            <person name="McLaughlin R.E."/>
            <person name="Gipson M."/>
            <person name="Ducey T.F."/>
            <person name="Ownbey T."/>
            <person name="Hartman K."/>
            <person name="Nydick C."/>
            <person name="Carson M.B."/>
            <person name="Vaughn J."/>
            <person name="Thomson C."/>
            <person name="Song L."/>
            <person name="Lin S."/>
            <person name="Yuan X."/>
            <person name="Najar F."/>
            <person name="Zhan M."/>
            <person name="Ren Q."/>
            <person name="Zhu H."/>
            <person name="Qi S."/>
            <person name="Kenton S.M."/>
            <person name="Lai H."/>
            <person name="White J.D."/>
            <person name="Clifton S."/>
            <person name="Roe B.A."/>
            <person name="Dyer D.W."/>
        </authorList>
    </citation>
    <scope>NUCLEOTIDE SEQUENCE [LARGE SCALE GENOMIC DNA]</scope>
    <source>
        <strain>ATCC 700825 / FA 1090</strain>
    </source>
</reference>
<keyword id="KW-0963">Cytoplasm</keyword>
<keyword id="KW-0350">Heme biosynthesis</keyword>
<keyword id="KW-0408">Iron</keyword>
<keyword id="KW-0456">Lyase</keyword>
<keyword id="KW-0479">Metal-binding</keyword>
<keyword id="KW-0627">Porphyrin biosynthesis</keyword>
<keyword id="KW-1185">Reference proteome</keyword>
<evidence type="ECO:0000255" key="1">
    <source>
        <dbReference type="HAMAP-Rule" id="MF_00323"/>
    </source>
</evidence>
<organism>
    <name type="scientific">Neisseria gonorrhoeae (strain ATCC 700825 / FA 1090)</name>
    <dbReference type="NCBI Taxonomy" id="242231"/>
    <lineage>
        <taxon>Bacteria</taxon>
        <taxon>Pseudomonadati</taxon>
        <taxon>Pseudomonadota</taxon>
        <taxon>Betaproteobacteria</taxon>
        <taxon>Neisseriales</taxon>
        <taxon>Neisseriaceae</taxon>
        <taxon>Neisseria</taxon>
    </lineage>
</organism>
<protein>
    <recommendedName>
        <fullName evidence="1">Ferrochelatase</fullName>
        <ecNumber evidence="1">4.98.1.1</ecNumber>
    </recommendedName>
    <alternativeName>
        <fullName evidence="1">Heme synthase</fullName>
    </alternativeName>
    <alternativeName>
        <fullName evidence="1">Protoheme ferro-lyase</fullName>
    </alternativeName>
</protein>
<feature type="chain" id="PRO_1000019328" description="Ferrochelatase">
    <location>
        <begin position="1"/>
        <end position="336"/>
    </location>
</feature>
<feature type="binding site" evidence="1">
    <location>
        <position position="206"/>
    </location>
    <ligand>
        <name>Fe cation</name>
        <dbReference type="ChEBI" id="CHEBI:24875"/>
    </ligand>
</feature>
<feature type="binding site" evidence="1">
    <location>
        <position position="287"/>
    </location>
    <ligand>
        <name>Fe cation</name>
        <dbReference type="ChEBI" id="CHEBI:24875"/>
    </ligand>
</feature>
<proteinExistence type="inferred from homology"/>
<name>HEMH_NEIG1</name>
<sequence length="336" mass="38061">MLPFLPEPSLSYTQQNRTAVLLLNLGTPDAPTAQAVRPYLKSFLTDRRIVELPKWLWYPILHGLVLTFRPKKSAHAYEKIWFKEGSPLEVYTARQAAALAERMPDLIVRHAMTYGNPSIADVLAELKSQGVGRLLAIPLYPQYAASSSGAAVDKVCEQLLLQRNQMSVRTISRFYDDAGYIDAMKNHILRYWAEHGRGKKLMLSFHGVPQKHYDLGDPYPDECRHTAKLLAEALELTEDEYTVSFQSQFGRAKWVTPSTQDLFGKLPKQGVTELDVFCPGFLADCLETMEEIALMGREQFYEAGGKNYRYIPCLNDNPDWIDALVALAEENLGGWR</sequence>
<gene>
    <name evidence="1" type="primary">hemH</name>
    <name type="ordered locus">NGO_0293</name>
</gene>